<gene>
    <name evidence="1" type="primary">ileS</name>
    <name type="ordered locus">Cla_1161</name>
</gene>
<reference key="1">
    <citation type="journal article" date="2008" name="Foodborne Pathog. Dis.">
        <title>The complete genome sequence and analysis of the human pathogen Campylobacter lari.</title>
        <authorList>
            <person name="Miller W.G."/>
            <person name="Wang G."/>
            <person name="Binnewies T.T."/>
            <person name="Parker C.T."/>
        </authorList>
    </citation>
    <scope>NUCLEOTIDE SEQUENCE [LARGE SCALE GENOMIC DNA]</scope>
    <source>
        <strain>RM2100 / D67 / ATCC BAA-1060</strain>
    </source>
</reference>
<keyword id="KW-0030">Aminoacyl-tRNA synthetase</keyword>
<keyword id="KW-0067">ATP-binding</keyword>
<keyword id="KW-0963">Cytoplasm</keyword>
<keyword id="KW-0436">Ligase</keyword>
<keyword id="KW-0479">Metal-binding</keyword>
<keyword id="KW-0547">Nucleotide-binding</keyword>
<keyword id="KW-0648">Protein biosynthesis</keyword>
<keyword id="KW-1185">Reference proteome</keyword>
<keyword id="KW-0862">Zinc</keyword>
<comment type="function">
    <text evidence="1">Catalyzes the attachment of isoleucine to tRNA(Ile). As IleRS can inadvertently accommodate and process structurally similar amino acids such as valine, to avoid such errors it has two additional distinct tRNA(Ile)-dependent editing activities. One activity is designated as 'pretransfer' editing and involves the hydrolysis of activated Val-AMP. The other activity is designated 'posttransfer' editing and involves deacylation of mischarged Val-tRNA(Ile).</text>
</comment>
<comment type="catalytic activity">
    <reaction evidence="1">
        <text>tRNA(Ile) + L-isoleucine + ATP = L-isoleucyl-tRNA(Ile) + AMP + diphosphate</text>
        <dbReference type="Rhea" id="RHEA:11060"/>
        <dbReference type="Rhea" id="RHEA-COMP:9666"/>
        <dbReference type="Rhea" id="RHEA-COMP:9695"/>
        <dbReference type="ChEBI" id="CHEBI:30616"/>
        <dbReference type="ChEBI" id="CHEBI:33019"/>
        <dbReference type="ChEBI" id="CHEBI:58045"/>
        <dbReference type="ChEBI" id="CHEBI:78442"/>
        <dbReference type="ChEBI" id="CHEBI:78528"/>
        <dbReference type="ChEBI" id="CHEBI:456215"/>
        <dbReference type="EC" id="6.1.1.5"/>
    </reaction>
</comment>
<comment type="cofactor">
    <cofactor evidence="1">
        <name>Zn(2+)</name>
        <dbReference type="ChEBI" id="CHEBI:29105"/>
    </cofactor>
    <text evidence="1">Binds 1 zinc ion per subunit.</text>
</comment>
<comment type="subunit">
    <text evidence="1">Monomer.</text>
</comment>
<comment type="subcellular location">
    <subcellularLocation>
        <location evidence="1">Cytoplasm</location>
    </subcellularLocation>
</comment>
<comment type="domain">
    <text evidence="1">IleRS has two distinct active sites: one for aminoacylation and one for editing. The misactivated valine is translocated from the active site to the editing site, which sterically excludes the correctly activated isoleucine. The single editing site contains two valyl binding pockets, one specific for each substrate (Val-AMP or Val-tRNA(Ile)).</text>
</comment>
<comment type="similarity">
    <text evidence="1">Belongs to the class-I aminoacyl-tRNA synthetase family. IleS type 1 subfamily.</text>
</comment>
<name>SYI_CAMLR</name>
<evidence type="ECO:0000255" key="1">
    <source>
        <dbReference type="HAMAP-Rule" id="MF_02002"/>
    </source>
</evidence>
<accession>B9KD44</accession>
<sequence length="921" mass="106124">MDYKDTLLLPNTTFAMRANLAELEPKRFDKWFENNYAYEKMKQKRQGVSESFTLHDGPPYANGHLHIGHALNKILKDIIIKMHYFQGKKVRFTPGWDCHGLPIEQQVEVKLKDKKQNLSKKQIRELCREHAREFVNIQRDEFKSLGVIADWDEPYLTMKNAFEADIYKALCKIAKKGLLLERSKPVFWSWAAKSALAEAEVEYEEKEDYSIYVAFNLDEASCKKLGVENAKAVIWTTTPWTLPANQAISLNPNEKYIITKEGYIFAKALLENMINKNFTQGEIQKELLGSEFENLSAINPLNQRKSTLILGEHVLMDGGTGLVHTAPGHGEDDYYACLKYNIEVIMPVDDGGYYDETLRAKGLLPEHLLAEFIGLHIFKANERILELLGEALLESSKFTHSYPFCWRTHKPVIYRATKQWFILMDEKKLDGKSLRELALEQLNSVKFYPESGVKRLSSMIENRPDWCISRQRDWGVPIAFFRDKKSQEVIFDDDVLDHLVGIFEKNGADAWWDLEIKDLLPPNSKYNPNNLEKVYDILDVWFDSGSTWEAVLNSARYDAGEYQASMYLEGSDQHRGWFQSSLLISTAINHKTPYKNILTHGFTVDEKGQKMSKSKGNVVLPQNVAKNYGVEILRLWIMLSDYSTDLKISDNILKQVSEQYRKIRNTIRFLLANTNDIEFVETKNFTLLDKWILMRAKIAFEICENAFEKYEFSKGFSVLLNFLSADLSGIYLDICKDRLYCNAKDDSKRVSAQSAMVLIARKLFALLAPSLTYTIDEALEHANVAIKENAKDVFDLLNKQGFEYEYKIEDELFIKSREKFFEIIDGLKKDKIIKSTLELSLQTSANELLSEDLEEIADWFMVSVVESIDEQKALAEFKIDNIGFKIVKSSLNKCPRCWKFLAKEDGCLCPRCNGVEKAKNV</sequence>
<organism>
    <name type="scientific">Campylobacter lari (strain RM2100 / D67 / ATCC BAA-1060)</name>
    <dbReference type="NCBI Taxonomy" id="306263"/>
    <lineage>
        <taxon>Bacteria</taxon>
        <taxon>Pseudomonadati</taxon>
        <taxon>Campylobacterota</taxon>
        <taxon>Epsilonproteobacteria</taxon>
        <taxon>Campylobacterales</taxon>
        <taxon>Campylobacteraceae</taxon>
        <taxon>Campylobacter</taxon>
    </lineage>
</organism>
<feature type="chain" id="PRO_1000189141" description="Isoleucine--tRNA ligase">
    <location>
        <begin position="1"/>
        <end position="921"/>
    </location>
</feature>
<feature type="short sequence motif" description="'HIGH' region">
    <location>
        <begin position="59"/>
        <end position="69"/>
    </location>
</feature>
<feature type="short sequence motif" description="'KMSKS' region">
    <location>
        <begin position="610"/>
        <end position="614"/>
    </location>
</feature>
<feature type="binding site" evidence="1">
    <location>
        <position position="569"/>
    </location>
    <ligand>
        <name>L-isoleucyl-5'-AMP</name>
        <dbReference type="ChEBI" id="CHEBI:178002"/>
    </ligand>
</feature>
<feature type="binding site" evidence="1">
    <location>
        <position position="613"/>
    </location>
    <ligand>
        <name>ATP</name>
        <dbReference type="ChEBI" id="CHEBI:30616"/>
    </ligand>
</feature>
<feature type="binding site" evidence="1">
    <location>
        <position position="894"/>
    </location>
    <ligand>
        <name>Zn(2+)</name>
        <dbReference type="ChEBI" id="CHEBI:29105"/>
    </ligand>
</feature>
<feature type="binding site" evidence="1">
    <location>
        <position position="897"/>
    </location>
    <ligand>
        <name>Zn(2+)</name>
        <dbReference type="ChEBI" id="CHEBI:29105"/>
    </ligand>
</feature>
<feature type="binding site" evidence="1">
    <location>
        <position position="909"/>
    </location>
    <ligand>
        <name>Zn(2+)</name>
        <dbReference type="ChEBI" id="CHEBI:29105"/>
    </ligand>
</feature>
<feature type="binding site" evidence="1">
    <location>
        <position position="912"/>
    </location>
    <ligand>
        <name>Zn(2+)</name>
        <dbReference type="ChEBI" id="CHEBI:29105"/>
    </ligand>
</feature>
<proteinExistence type="inferred from homology"/>
<protein>
    <recommendedName>
        <fullName evidence="1">Isoleucine--tRNA ligase</fullName>
        <ecNumber evidence="1">6.1.1.5</ecNumber>
    </recommendedName>
    <alternativeName>
        <fullName evidence="1">Isoleucyl-tRNA synthetase</fullName>
        <shortName evidence="1">IleRS</shortName>
    </alternativeName>
</protein>
<dbReference type="EC" id="6.1.1.5" evidence="1"/>
<dbReference type="EMBL" id="CP000932">
    <property type="protein sequence ID" value="ACM64483.1"/>
    <property type="molecule type" value="Genomic_DNA"/>
</dbReference>
<dbReference type="RefSeq" id="WP_012661866.1">
    <property type="nucleotide sequence ID" value="NC_012039.1"/>
</dbReference>
<dbReference type="SMR" id="B9KD44"/>
<dbReference type="STRING" id="306263.Cla_1161"/>
<dbReference type="KEGG" id="cla:CLA_1161"/>
<dbReference type="PATRIC" id="fig|306263.5.peg.1149"/>
<dbReference type="eggNOG" id="COG0060">
    <property type="taxonomic scope" value="Bacteria"/>
</dbReference>
<dbReference type="HOGENOM" id="CLU_001493_7_1_7"/>
<dbReference type="Proteomes" id="UP000007727">
    <property type="component" value="Chromosome"/>
</dbReference>
<dbReference type="GO" id="GO:0005829">
    <property type="term" value="C:cytosol"/>
    <property type="evidence" value="ECO:0007669"/>
    <property type="project" value="TreeGrafter"/>
</dbReference>
<dbReference type="GO" id="GO:0002161">
    <property type="term" value="F:aminoacyl-tRNA deacylase activity"/>
    <property type="evidence" value="ECO:0007669"/>
    <property type="project" value="InterPro"/>
</dbReference>
<dbReference type="GO" id="GO:0005524">
    <property type="term" value="F:ATP binding"/>
    <property type="evidence" value="ECO:0007669"/>
    <property type="project" value="UniProtKB-UniRule"/>
</dbReference>
<dbReference type="GO" id="GO:0004822">
    <property type="term" value="F:isoleucine-tRNA ligase activity"/>
    <property type="evidence" value="ECO:0007669"/>
    <property type="project" value="UniProtKB-UniRule"/>
</dbReference>
<dbReference type="GO" id="GO:0000049">
    <property type="term" value="F:tRNA binding"/>
    <property type="evidence" value="ECO:0007669"/>
    <property type="project" value="InterPro"/>
</dbReference>
<dbReference type="GO" id="GO:0008270">
    <property type="term" value="F:zinc ion binding"/>
    <property type="evidence" value="ECO:0007669"/>
    <property type="project" value="UniProtKB-UniRule"/>
</dbReference>
<dbReference type="GO" id="GO:0006428">
    <property type="term" value="P:isoleucyl-tRNA aminoacylation"/>
    <property type="evidence" value="ECO:0007669"/>
    <property type="project" value="UniProtKB-UniRule"/>
</dbReference>
<dbReference type="CDD" id="cd07960">
    <property type="entry name" value="Anticodon_Ia_Ile_BEm"/>
    <property type="match status" value="1"/>
</dbReference>
<dbReference type="FunFam" id="3.40.50.620:FF:000092">
    <property type="entry name" value="Isoleucine--tRNA ligase"/>
    <property type="match status" value="1"/>
</dbReference>
<dbReference type="Gene3D" id="1.10.730.20">
    <property type="match status" value="1"/>
</dbReference>
<dbReference type="Gene3D" id="3.40.50.620">
    <property type="entry name" value="HUPs"/>
    <property type="match status" value="2"/>
</dbReference>
<dbReference type="Gene3D" id="1.10.10.830">
    <property type="entry name" value="Ile-tRNA synthetase CP2 domain-like"/>
    <property type="match status" value="1"/>
</dbReference>
<dbReference type="Gene3D" id="3.90.740.10">
    <property type="entry name" value="Valyl/Leucyl/Isoleucyl-tRNA synthetase, editing domain"/>
    <property type="match status" value="1"/>
</dbReference>
<dbReference type="HAMAP" id="MF_02002">
    <property type="entry name" value="Ile_tRNA_synth_type1"/>
    <property type="match status" value="1"/>
</dbReference>
<dbReference type="InterPro" id="IPR001412">
    <property type="entry name" value="aa-tRNA-synth_I_CS"/>
</dbReference>
<dbReference type="InterPro" id="IPR002300">
    <property type="entry name" value="aa-tRNA-synth_Ia"/>
</dbReference>
<dbReference type="InterPro" id="IPR033708">
    <property type="entry name" value="Anticodon_Ile_BEm"/>
</dbReference>
<dbReference type="InterPro" id="IPR002301">
    <property type="entry name" value="Ile-tRNA-ligase"/>
</dbReference>
<dbReference type="InterPro" id="IPR023585">
    <property type="entry name" value="Ile-tRNA-ligase_type1"/>
</dbReference>
<dbReference type="InterPro" id="IPR050081">
    <property type="entry name" value="Ile-tRNA_ligase"/>
</dbReference>
<dbReference type="InterPro" id="IPR013155">
    <property type="entry name" value="M/V/L/I-tRNA-synth_anticd-bd"/>
</dbReference>
<dbReference type="InterPro" id="IPR014729">
    <property type="entry name" value="Rossmann-like_a/b/a_fold"/>
</dbReference>
<dbReference type="InterPro" id="IPR009080">
    <property type="entry name" value="tRNAsynth_Ia_anticodon-bd"/>
</dbReference>
<dbReference type="InterPro" id="IPR009008">
    <property type="entry name" value="Val/Leu/Ile-tRNA-synth_edit"/>
</dbReference>
<dbReference type="NCBIfam" id="TIGR00392">
    <property type="entry name" value="ileS"/>
    <property type="match status" value="1"/>
</dbReference>
<dbReference type="PANTHER" id="PTHR42765:SF1">
    <property type="entry name" value="ISOLEUCINE--TRNA LIGASE, MITOCHONDRIAL"/>
    <property type="match status" value="1"/>
</dbReference>
<dbReference type="PANTHER" id="PTHR42765">
    <property type="entry name" value="SOLEUCYL-TRNA SYNTHETASE"/>
    <property type="match status" value="1"/>
</dbReference>
<dbReference type="Pfam" id="PF08264">
    <property type="entry name" value="Anticodon_1"/>
    <property type="match status" value="1"/>
</dbReference>
<dbReference type="Pfam" id="PF00133">
    <property type="entry name" value="tRNA-synt_1"/>
    <property type="match status" value="1"/>
</dbReference>
<dbReference type="PRINTS" id="PR00984">
    <property type="entry name" value="TRNASYNTHILE"/>
</dbReference>
<dbReference type="SUPFAM" id="SSF47323">
    <property type="entry name" value="Anticodon-binding domain of a subclass of class I aminoacyl-tRNA synthetases"/>
    <property type="match status" value="1"/>
</dbReference>
<dbReference type="SUPFAM" id="SSF52374">
    <property type="entry name" value="Nucleotidylyl transferase"/>
    <property type="match status" value="1"/>
</dbReference>
<dbReference type="SUPFAM" id="SSF50677">
    <property type="entry name" value="ValRS/IleRS/LeuRS editing domain"/>
    <property type="match status" value="1"/>
</dbReference>
<dbReference type="PROSITE" id="PS00178">
    <property type="entry name" value="AA_TRNA_LIGASE_I"/>
    <property type="match status" value="1"/>
</dbReference>